<keyword id="KW-0030">Aminoacyl-tRNA synthetase</keyword>
<keyword id="KW-0067">ATP-binding</keyword>
<keyword id="KW-0963">Cytoplasm</keyword>
<keyword id="KW-0436">Ligase</keyword>
<keyword id="KW-0547">Nucleotide-binding</keyword>
<keyword id="KW-0648">Protein biosynthesis</keyword>
<keyword id="KW-1185">Reference proteome</keyword>
<evidence type="ECO:0000255" key="1">
    <source>
        <dbReference type="HAMAP-Rule" id="MF_00126"/>
    </source>
</evidence>
<evidence type="ECO:0000256" key="2">
    <source>
        <dbReference type="SAM" id="MobiDB-lite"/>
    </source>
</evidence>
<dbReference type="EC" id="6.1.1.18" evidence="1"/>
<dbReference type="EMBL" id="AE016853">
    <property type="protein sequence ID" value="AAO57212.1"/>
    <property type="molecule type" value="Genomic_DNA"/>
</dbReference>
<dbReference type="RefSeq" id="NP_793517.1">
    <property type="nucleotide sequence ID" value="NC_004578.1"/>
</dbReference>
<dbReference type="SMR" id="Q87YQ1"/>
<dbReference type="STRING" id="223283.PSPTO_3743"/>
<dbReference type="KEGG" id="pst:PSPTO_3743"/>
<dbReference type="PATRIC" id="fig|223283.9.peg.3835"/>
<dbReference type="eggNOG" id="COG0008">
    <property type="taxonomic scope" value="Bacteria"/>
</dbReference>
<dbReference type="HOGENOM" id="CLU_001882_2_3_6"/>
<dbReference type="OrthoDB" id="9801560at2"/>
<dbReference type="PhylomeDB" id="Q87YQ1"/>
<dbReference type="Proteomes" id="UP000002515">
    <property type="component" value="Chromosome"/>
</dbReference>
<dbReference type="GO" id="GO:0005829">
    <property type="term" value="C:cytosol"/>
    <property type="evidence" value="ECO:0007669"/>
    <property type="project" value="TreeGrafter"/>
</dbReference>
<dbReference type="GO" id="GO:0005524">
    <property type="term" value="F:ATP binding"/>
    <property type="evidence" value="ECO:0007669"/>
    <property type="project" value="UniProtKB-UniRule"/>
</dbReference>
<dbReference type="GO" id="GO:0004819">
    <property type="term" value="F:glutamine-tRNA ligase activity"/>
    <property type="evidence" value="ECO:0007669"/>
    <property type="project" value="UniProtKB-UniRule"/>
</dbReference>
<dbReference type="GO" id="GO:0006425">
    <property type="term" value="P:glutaminyl-tRNA aminoacylation"/>
    <property type="evidence" value="ECO:0007669"/>
    <property type="project" value="InterPro"/>
</dbReference>
<dbReference type="GO" id="GO:0006424">
    <property type="term" value="P:glutamyl-tRNA aminoacylation"/>
    <property type="evidence" value="ECO:0007669"/>
    <property type="project" value="UniProtKB-UniRule"/>
</dbReference>
<dbReference type="CDD" id="cd00807">
    <property type="entry name" value="GlnRS_core"/>
    <property type="match status" value="1"/>
</dbReference>
<dbReference type="FunFam" id="1.10.1160.10:FF:000001">
    <property type="entry name" value="Glutamine--tRNA ligase"/>
    <property type="match status" value="1"/>
</dbReference>
<dbReference type="FunFam" id="2.40.240.10:FF:000001">
    <property type="entry name" value="Glutamine--tRNA ligase"/>
    <property type="match status" value="1"/>
</dbReference>
<dbReference type="FunFam" id="3.90.800.10:FF:000001">
    <property type="entry name" value="Glutamine--tRNA ligase"/>
    <property type="match status" value="1"/>
</dbReference>
<dbReference type="FunFam" id="3.40.50.620:FF:000037">
    <property type="entry name" value="Glutamine--tRNA ligase cytoplasmic"/>
    <property type="match status" value="1"/>
</dbReference>
<dbReference type="Gene3D" id="1.10.1160.10">
    <property type="entry name" value="Glutamyl-trna Synthetase, Domain 2"/>
    <property type="match status" value="1"/>
</dbReference>
<dbReference type="Gene3D" id="3.90.800.10">
    <property type="entry name" value="Glutamyl-tRNA Synthetase, Domain 3"/>
    <property type="match status" value="1"/>
</dbReference>
<dbReference type="Gene3D" id="3.40.50.620">
    <property type="entry name" value="HUPs"/>
    <property type="match status" value="1"/>
</dbReference>
<dbReference type="Gene3D" id="2.40.240.10">
    <property type="entry name" value="Ribosomal Protein L25, Chain P"/>
    <property type="match status" value="2"/>
</dbReference>
<dbReference type="HAMAP" id="MF_00126">
    <property type="entry name" value="Gln_tRNA_synth"/>
    <property type="match status" value="1"/>
</dbReference>
<dbReference type="InterPro" id="IPR001412">
    <property type="entry name" value="aa-tRNA-synth_I_CS"/>
</dbReference>
<dbReference type="InterPro" id="IPR004514">
    <property type="entry name" value="Gln-tRNA-synth"/>
</dbReference>
<dbReference type="InterPro" id="IPR050132">
    <property type="entry name" value="Gln/Glu-tRNA_Ligase"/>
</dbReference>
<dbReference type="InterPro" id="IPR022861">
    <property type="entry name" value="Gln_tRNA_ligase_bac"/>
</dbReference>
<dbReference type="InterPro" id="IPR000924">
    <property type="entry name" value="Glu/Gln-tRNA-synth"/>
</dbReference>
<dbReference type="InterPro" id="IPR020058">
    <property type="entry name" value="Glu/Gln-tRNA-synth_Ib_cat-dom"/>
</dbReference>
<dbReference type="InterPro" id="IPR020059">
    <property type="entry name" value="Glu/Gln-tRNA-synth_Ib_codon-bd"/>
</dbReference>
<dbReference type="InterPro" id="IPR020061">
    <property type="entry name" value="Glu_tRNA_lig_a-bdl"/>
</dbReference>
<dbReference type="InterPro" id="IPR020056">
    <property type="entry name" value="Rbsml_bL25/Gln-tRNA_synth_N"/>
</dbReference>
<dbReference type="InterPro" id="IPR011035">
    <property type="entry name" value="Ribosomal_bL25/Gln-tRNA_synth"/>
</dbReference>
<dbReference type="InterPro" id="IPR014729">
    <property type="entry name" value="Rossmann-like_a/b/a_fold"/>
</dbReference>
<dbReference type="InterPro" id="IPR049437">
    <property type="entry name" value="tRNA-synt_1c_C2"/>
</dbReference>
<dbReference type="NCBIfam" id="TIGR00440">
    <property type="entry name" value="glnS"/>
    <property type="match status" value="1"/>
</dbReference>
<dbReference type="NCBIfam" id="NF011291">
    <property type="entry name" value="PRK14703.1"/>
    <property type="match status" value="1"/>
</dbReference>
<dbReference type="PANTHER" id="PTHR43097:SF5">
    <property type="entry name" value="GLUTAMATE--TRNA LIGASE"/>
    <property type="match status" value="1"/>
</dbReference>
<dbReference type="PANTHER" id="PTHR43097">
    <property type="entry name" value="GLUTAMINE-TRNA LIGASE"/>
    <property type="match status" value="1"/>
</dbReference>
<dbReference type="Pfam" id="PF00749">
    <property type="entry name" value="tRNA-synt_1c"/>
    <property type="match status" value="1"/>
</dbReference>
<dbReference type="Pfam" id="PF03950">
    <property type="entry name" value="tRNA-synt_1c_C"/>
    <property type="match status" value="1"/>
</dbReference>
<dbReference type="Pfam" id="PF20974">
    <property type="entry name" value="tRNA-synt_1c_C2"/>
    <property type="match status" value="1"/>
</dbReference>
<dbReference type="PRINTS" id="PR00987">
    <property type="entry name" value="TRNASYNTHGLU"/>
</dbReference>
<dbReference type="SUPFAM" id="SSF52374">
    <property type="entry name" value="Nucleotidylyl transferase"/>
    <property type="match status" value="1"/>
</dbReference>
<dbReference type="SUPFAM" id="SSF50715">
    <property type="entry name" value="Ribosomal protein L25-like"/>
    <property type="match status" value="1"/>
</dbReference>
<dbReference type="PROSITE" id="PS00178">
    <property type="entry name" value="AA_TRNA_LIGASE_I"/>
    <property type="match status" value="1"/>
</dbReference>
<proteinExistence type="inferred from homology"/>
<gene>
    <name evidence="1" type="primary">glnS</name>
    <name type="ordered locus">PSPTO_3743</name>
</gene>
<protein>
    <recommendedName>
        <fullName evidence="1">Glutamine--tRNA ligase</fullName>
        <ecNumber evidence="1">6.1.1.18</ecNumber>
    </recommendedName>
    <alternativeName>
        <fullName evidence="1">Glutaminyl-tRNA synthetase</fullName>
        <shortName evidence="1">GlnRS</shortName>
    </alternativeName>
</protein>
<comment type="catalytic activity">
    <reaction evidence="1">
        <text>tRNA(Gln) + L-glutamine + ATP = L-glutaminyl-tRNA(Gln) + AMP + diphosphate</text>
        <dbReference type="Rhea" id="RHEA:20121"/>
        <dbReference type="Rhea" id="RHEA-COMP:9662"/>
        <dbReference type="Rhea" id="RHEA-COMP:9681"/>
        <dbReference type="ChEBI" id="CHEBI:30616"/>
        <dbReference type="ChEBI" id="CHEBI:33019"/>
        <dbReference type="ChEBI" id="CHEBI:58359"/>
        <dbReference type="ChEBI" id="CHEBI:78442"/>
        <dbReference type="ChEBI" id="CHEBI:78521"/>
        <dbReference type="ChEBI" id="CHEBI:456215"/>
        <dbReference type="EC" id="6.1.1.18"/>
    </reaction>
</comment>
<comment type="subunit">
    <text evidence="1">Monomer.</text>
</comment>
<comment type="subcellular location">
    <subcellularLocation>
        <location evidence="1">Cytoplasm</location>
    </subcellularLocation>
</comment>
<comment type="similarity">
    <text evidence="1">Belongs to the class-I aminoacyl-tRNA synthetase family.</text>
</comment>
<sequence>MSKDPMSKPTPEPAAHSKAGPAVPTNFLRPIVQADLDSGKHSKIITRFPPEPNGYLHIGHAKSICVNFGLAKEFGGDTHLRFDDTNPAKEDQEYIDAIMNDVKWLGFEWAGEVRYASQYFDQLHDWAVELIKAGKAYVDDLTPEQAREYRGTLTEPGKNSPFRERSVEENIDLFARMKAGEFEDGARVLRAKIDMASPNMNLRDPILYRIRHAHHHQTGDKWCIYPIYDFTHGQSDAIEGITHSICTLEFESHRPLYDWFLDNLPVPCKPRQYEFSRLNLNYTITSKRKLKQLVDEKHVNGWDDPRMSTLSGFRRRGYTPKSIRNFCEMIGTNRSDGVVDFGMLEFSIRDDLDHSAPRAMCVLRPLKVVITNYPEGQVEKLELPRHPKEDLGMRELPFSREIYIDRDDYMEEPPKGYKRLEPNGEVRLRGSYVIRADEAIKDADGNIVELRCSYDPDTLGKNPEGRKVKGVVHWVPAAESVECEVRLYDRLFRSANPEKAEDGASFLDNINPDSLQVLTGCRAEPSLGHAQPEDRFQFEREGYFCADIKDSKPGQPVFNRTVTLRDSWT</sequence>
<accession>Q87YQ1</accession>
<feature type="chain" id="PRO_0000195845" description="Glutamine--tRNA ligase">
    <location>
        <begin position="1"/>
        <end position="569"/>
    </location>
</feature>
<feature type="region of interest" description="Disordered" evidence="2">
    <location>
        <begin position="1"/>
        <end position="23"/>
    </location>
</feature>
<feature type="short sequence motif" description="'HIGH' region" evidence="1">
    <location>
        <begin position="50"/>
        <end position="60"/>
    </location>
</feature>
<feature type="short sequence motif" description="'KMSKS' region" evidence="1">
    <location>
        <begin position="284"/>
        <end position="288"/>
    </location>
</feature>
<feature type="binding site" evidence="1">
    <location>
        <begin position="51"/>
        <end position="53"/>
    </location>
    <ligand>
        <name>ATP</name>
        <dbReference type="ChEBI" id="CHEBI:30616"/>
    </ligand>
</feature>
<feature type="binding site" evidence="1">
    <location>
        <begin position="57"/>
        <end position="63"/>
    </location>
    <ligand>
        <name>ATP</name>
        <dbReference type="ChEBI" id="CHEBI:30616"/>
    </ligand>
</feature>
<feature type="binding site" evidence="1">
    <location>
        <position position="83"/>
    </location>
    <ligand>
        <name>L-glutamine</name>
        <dbReference type="ChEBI" id="CHEBI:58359"/>
    </ligand>
</feature>
<feature type="binding site" evidence="1">
    <location>
        <position position="228"/>
    </location>
    <ligand>
        <name>L-glutamine</name>
        <dbReference type="ChEBI" id="CHEBI:58359"/>
    </ligand>
</feature>
<feature type="binding site" evidence="1">
    <location>
        <position position="247"/>
    </location>
    <ligand>
        <name>ATP</name>
        <dbReference type="ChEBI" id="CHEBI:30616"/>
    </ligand>
</feature>
<feature type="binding site" evidence="1">
    <location>
        <begin position="277"/>
        <end position="278"/>
    </location>
    <ligand>
        <name>ATP</name>
        <dbReference type="ChEBI" id="CHEBI:30616"/>
    </ligand>
</feature>
<name>SYQ_PSESM</name>
<organism>
    <name type="scientific">Pseudomonas syringae pv. tomato (strain ATCC BAA-871 / DC3000)</name>
    <dbReference type="NCBI Taxonomy" id="223283"/>
    <lineage>
        <taxon>Bacteria</taxon>
        <taxon>Pseudomonadati</taxon>
        <taxon>Pseudomonadota</taxon>
        <taxon>Gammaproteobacteria</taxon>
        <taxon>Pseudomonadales</taxon>
        <taxon>Pseudomonadaceae</taxon>
        <taxon>Pseudomonas</taxon>
    </lineage>
</organism>
<reference key="1">
    <citation type="journal article" date="2003" name="Proc. Natl. Acad. Sci. U.S.A.">
        <title>The complete genome sequence of the Arabidopsis and tomato pathogen Pseudomonas syringae pv. tomato DC3000.</title>
        <authorList>
            <person name="Buell C.R."/>
            <person name="Joardar V."/>
            <person name="Lindeberg M."/>
            <person name="Selengut J."/>
            <person name="Paulsen I.T."/>
            <person name="Gwinn M.L."/>
            <person name="Dodson R.J."/>
            <person name="DeBoy R.T."/>
            <person name="Durkin A.S."/>
            <person name="Kolonay J.F."/>
            <person name="Madupu R."/>
            <person name="Daugherty S.C."/>
            <person name="Brinkac L.M."/>
            <person name="Beanan M.J."/>
            <person name="Haft D.H."/>
            <person name="Nelson W.C."/>
            <person name="Davidsen T.M."/>
            <person name="Zafar N."/>
            <person name="Zhou L."/>
            <person name="Liu J."/>
            <person name="Yuan Q."/>
            <person name="Khouri H.M."/>
            <person name="Fedorova N.B."/>
            <person name="Tran B."/>
            <person name="Russell D."/>
            <person name="Berry K.J."/>
            <person name="Utterback T.R."/>
            <person name="Van Aken S.E."/>
            <person name="Feldblyum T.V."/>
            <person name="D'Ascenzo M."/>
            <person name="Deng W.-L."/>
            <person name="Ramos A.R."/>
            <person name="Alfano J.R."/>
            <person name="Cartinhour S."/>
            <person name="Chatterjee A.K."/>
            <person name="Delaney T.P."/>
            <person name="Lazarowitz S.G."/>
            <person name="Martin G.B."/>
            <person name="Schneider D.J."/>
            <person name="Tang X."/>
            <person name="Bender C.L."/>
            <person name="White O."/>
            <person name="Fraser C.M."/>
            <person name="Collmer A."/>
        </authorList>
    </citation>
    <scope>NUCLEOTIDE SEQUENCE [LARGE SCALE GENOMIC DNA]</scope>
    <source>
        <strain>ATCC BAA-871 / DC3000</strain>
    </source>
</reference>